<organism>
    <name type="scientific">Chlamydomonas reinhardtii</name>
    <name type="common">Chlamydomonas smithii</name>
    <dbReference type="NCBI Taxonomy" id="3055"/>
    <lineage>
        <taxon>Eukaryota</taxon>
        <taxon>Viridiplantae</taxon>
        <taxon>Chlorophyta</taxon>
        <taxon>core chlorophytes</taxon>
        <taxon>Chlorophyceae</taxon>
        <taxon>CS clade</taxon>
        <taxon>Chlamydomonadales</taxon>
        <taxon>Chlamydomonadaceae</taxon>
        <taxon>Chlamydomonas</taxon>
    </lineage>
</organism>
<comment type="function">
    <text evidence="1">One of the primary rRNA binding proteins, it binds directly to 16S rRNA where it nucleates assembly of the body of the 30S subunit.</text>
</comment>
<comment type="function">
    <text evidence="1">With S5 and S12 plays an important role in translational accuracy.</text>
</comment>
<comment type="subunit">
    <text evidence="1">Part of the 30S ribosomal subunit. Contacts protein S5. The interaction surface between S4 and S5 is involved in control of translational fidelity (By similarity).</text>
</comment>
<comment type="subcellular location">
    <subcellularLocation>
        <location>Plastid</location>
        <location>Chloroplast</location>
    </subcellularLocation>
</comment>
<comment type="similarity">
    <text evidence="2">Belongs to the universal ribosomal protein uS4 family.</text>
</comment>
<geneLocation type="chloroplast"/>
<dbReference type="EMBL" id="U17357">
    <property type="protein sequence ID" value="AAA81363.1"/>
    <property type="molecule type" value="Genomic_DNA"/>
</dbReference>
<dbReference type="EMBL" id="FJ423446">
    <property type="protein sequence ID" value="ACJ50109.1"/>
    <property type="molecule type" value="Genomic_DNA"/>
</dbReference>
<dbReference type="EMBL" id="BK000554">
    <property type="protein sequence ID" value="DAA00921.1"/>
    <property type="molecule type" value="Genomic_DNA"/>
</dbReference>
<dbReference type="PIR" id="S55251">
    <property type="entry name" value="S55251"/>
</dbReference>
<dbReference type="RefSeq" id="NP_958376.1">
    <property type="nucleotide sequence ID" value="NC_005353.1"/>
</dbReference>
<dbReference type="SMR" id="P48270"/>
<dbReference type="FunCoup" id="P48270">
    <property type="interactions" value="179"/>
</dbReference>
<dbReference type="STRING" id="3055.P48270"/>
<dbReference type="PaxDb" id="3055-DAA00921"/>
<dbReference type="GeneID" id="2716955"/>
<dbReference type="KEGG" id="cre:ChreCp020"/>
<dbReference type="eggNOG" id="KOG3301">
    <property type="taxonomic scope" value="Eukaryota"/>
</dbReference>
<dbReference type="HOGENOM" id="CLU_092403_0_1_1"/>
<dbReference type="InParanoid" id="P48270"/>
<dbReference type="Proteomes" id="UP000006906">
    <property type="component" value="Chloroplast"/>
</dbReference>
<dbReference type="GO" id="GO:0009507">
    <property type="term" value="C:chloroplast"/>
    <property type="evidence" value="ECO:0007669"/>
    <property type="project" value="UniProtKB-SubCell"/>
</dbReference>
<dbReference type="GO" id="GO:0015935">
    <property type="term" value="C:small ribosomal subunit"/>
    <property type="evidence" value="ECO:0000318"/>
    <property type="project" value="GO_Central"/>
</dbReference>
<dbReference type="GO" id="GO:0019843">
    <property type="term" value="F:rRNA binding"/>
    <property type="evidence" value="ECO:0000318"/>
    <property type="project" value="GO_Central"/>
</dbReference>
<dbReference type="GO" id="GO:0003735">
    <property type="term" value="F:structural constituent of ribosome"/>
    <property type="evidence" value="ECO:0000318"/>
    <property type="project" value="GO_Central"/>
</dbReference>
<dbReference type="GO" id="GO:0046677">
    <property type="term" value="P:response to antibiotic"/>
    <property type="evidence" value="ECO:0007669"/>
    <property type="project" value="UniProtKB-KW"/>
</dbReference>
<dbReference type="GO" id="GO:0042274">
    <property type="term" value="P:ribosomal small subunit biogenesis"/>
    <property type="evidence" value="ECO:0000318"/>
    <property type="project" value="GO_Central"/>
</dbReference>
<dbReference type="GO" id="GO:0006412">
    <property type="term" value="P:translation"/>
    <property type="evidence" value="ECO:0007669"/>
    <property type="project" value="UniProtKB-UniRule"/>
</dbReference>
<dbReference type="CDD" id="cd00165">
    <property type="entry name" value="S4"/>
    <property type="match status" value="2"/>
</dbReference>
<dbReference type="FunFam" id="1.10.1050.10:FF:000009">
    <property type="entry name" value="30S ribosomal protein S4, chloroplastic"/>
    <property type="match status" value="1"/>
</dbReference>
<dbReference type="FunFam" id="3.10.290.10:FF:000069">
    <property type="entry name" value="30S ribosomal protein S4, chloroplastic"/>
    <property type="match status" value="1"/>
</dbReference>
<dbReference type="Gene3D" id="1.10.1050.10">
    <property type="entry name" value="Ribosomal Protein S4 Delta 41, Chain A, domain 1"/>
    <property type="match status" value="1"/>
</dbReference>
<dbReference type="Gene3D" id="3.10.290.10">
    <property type="entry name" value="RNA-binding S4 domain"/>
    <property type="match status" value="2"/>
</dbReference>
<dbReference type="HAMAP" id="MF_01306_B">
    <property type="entry name" value="Ribosomal_uS4_B"/>
    <property type="match status" value="1"/>
</dbReference>
<dbReference type="InterPro" id="IPR022801">
    <property type="entry name" value="Ribosomal_uS4"/>
</dbReference>
<dbReference type="InterPro" id="IPR005709">
    <property type="entry name" value="Ribosomal_uS4_bac-type"/>
</dbReference>
<dbReference type="InterPro" id="IPR018079">
    <property type="entry name" value="Ribosomal_uS4_CS"/>
</dbReference>
<dbReference type="InterPro" id="IPR001912">
    <property type="entry name" value="Ribosomal_uS4_N"/>
</dbReference>
<dbReference type="InterPro" id="IPR002942">
    <property type="entry name" value="S4_RNA-bd"/>
</dbReference>
<dbReference type="InterPro" id="IPR036986">
    <property type="entry name" value="S4_RNA-bd_sf"/>
</dbReference>
<dbReference type="NCBIfam" id="NF003717">
    <property type="entry name" value="PRK05327.1"/>
    <property type="match status" value="1"/>
</dbReference>
<dbReference type="PANTHER" id="PTHR11831">
    <property type="entry name" value="30S 40S RIBOSOMAL PROTEIN"/>
    <property type="match status" value="1"/>
</dbReference>
<dbReference type="PANTHER" id="PTHR11831:SF4">
    <property type="entry name" value="SMALL RIBOSOMAL SUBUNIT PROTEIN US4M"/>
    <property type="match status" value="1"/>
</dbReference>
<dbReference type="Pfam" id="PF00163">
    <property type="entry name" value="Ribosomal_S4"/>
    <property type="match status" value="1"/>
</dbReference>
<dbReference type="Pfam" id="PF01479">
    <property type="entry name" value="S4"/>
    <property type="match status" value="2"/>
</dbReference>
<dbReference type="SMART" id="SM01390">
    <property type="entry name" value="Ribosomal_S4"/>
    <property type="match status" value="1"/>
</dbReference>
<dbReference type="SMART" id="SM00363">
    <property type="entry name" value="S4"/>
    <property type="match status" value="2"/>
</dbReference>
<dbReference type="SUPFAM" id="SSF55174">
    <property type="entry name" value="Alpha-L RNA-binding motif"/>
    <property type="match status" value="2"/>
</dbReference>
<dbReference type="PROSITE" id="PS00632">
    <property type="entry name" value="RIBOSOMAL_S4"/>
    <property type="match status" value="1"/>
</dbReference>
<dbReference type="PROSITE" id="PS50889">
    <property type="entry name" value="S4"/>
    <property type="match status" value="2"/>
</dbReference>
<reference key="1">
    <citation type="journal article" date="1995" name="Mol. Gen. Genet.">
        <title>The chloroplast gene encoding ribosomal protein S4 in Chlamydomonas reinhardtii spans an inverted repeat -- unique sequence junction and can be mutated to suppress a streptomycin dependence mutation in ribosomal protein S12.</title>
        <authorList>
            <person name="Randolph-Anderson B.L."/>
            <person name="Boynton J.E."/>
            <person name="Gillham N.W."/>
            <person name="Huang C."/>
            <person name="Liu X.-Q."/>
        </authorList>
    </citation>
    <scope>NUCLEOTIDE SEQUENCE [GENOMIC DNA]</scope>
    <scope>VARIANTS</scope>
    <source>
        <strain>137c / CC-125</strain>
    </source>
</reference>
<reference key="2">
    <citation type="journal article" date="2009" name="BMC Evol. Biol.">
        <title>Nucleotide diversity of the Chlamydomonas reinhardtii plastid genome: addressing the mutational-hazard hypothesis.</title>
        <authorList>
            <person name="Smith D.R."/>
            <person name="Lee R.W."/>
        </authorList>
    </citation>
    <scope>NUCLEOTIDE SEQUENCE [LARGE SCALE GENOMIC DNA]</scope>
    <source>
        <strain>CC-503</strain>
    </source>
</reference>
<reference key="3">
    <citation type="journal article" date="2002" name="Plant Cell">
        <title>Proteomic characterization of the small subunit of Chlamydomonas reinhardtii chloroplast ribosome: identification of a novel S1 domain-containing protein and unusually large orthologs of bacterial S2, S3, and S5.</title>
        <authorList>
            <person name="Yamaguchi K."/>
            <person name="Prieto S."/>
            <person name="Beligni M.V."/>
            <person name="Haynes P.A."/>
            <person name="McDonald W.H."/>
            <person name="Yates J.R. III"/>
            <person name="Mayfield S.P."/>
        </authorList>
    </citation>
    <scope>PROTEIN SEQUENCE OF 55-70; 77-84; 112-118 AND 198-215</scope>
    <source>
        <strain>Arg7/cw15</strain>
    </source>
</reference>
<reference key="4">
    <citation type="journal article" date="2002" name="Plant Cell">
        <title>The Chlamydomonas reinhardtii plastid chromosome: islands of genes in a sea of repeats.</title>
        <authorList>
            <person name="Maul J.E."/>
            <person name="Lilly J.W."/>
            <person name="Cui L."/>
            <person name="dePamphilis C.W."/>
            <person name="Miller W."/>
            <person name="Harris E.H."/>
            <person name="Stern D.B."/>
        </authorList>
    </citation>
    <scope>IDENTIFICATION</scope>
    <scope>COMPLETE PLASTID GENOME</scope>
</reference>
<keyword id="KW-0046">Antibiotic resistance</keyword>
<keyword id="KW-0150">Chloroplast</keyword>
<keyword id="KW-0903">Direct protein sequencing</keyword>
<keyword id="KW-0934">Plastid</keyword>
<keyword id="KW-1185">Reference proteome</keyword>
<keyword id="KW-0677">Repeat</keyword>
<keyword id="KW-0687">Ribonucleoprotein</keyword>
<keyword id="KW-0689">Ribosomal protein</keyword>
<keyword id="KW-0694">RNA-binding</keyword>
<keyword id="KW-0699">rRNA-binding</keyword>
<gene>
    <name type="primary">rps4</name>
</gene>
<accession>P48270</accession>
<accession>B7U1G2</accession>
<protein>
    <recommendedName>
        <fullName evidence="2">Small ribosomal subunit protein uS4c</fullName>
    </recommendedName>
    <alternativeName>
        <fullName>30S ribosomal protein S4, chloroplastic</fullName>
    </alternativeName>
</protein>
<sequence>MSRYLGPRLRVIRRIGKLRGFTRKKPFRRVFKGFGGFKGKVIPPGQHGLTKLLKTRPYDSSESDYLIRLKVKQRLRFNYGITERQLVNYVRKAKKIKESTGQVLLQFLEMRLDNIVFRLNMAPTIPAARQLISHGHIRVNNKKVNIPSYMCKPKDVISVAMKQRSLQLVNKNLQEYYRRMRFYKKRLEKTLPFILLKIKPLGLTSVTAAVELITKGNVRVNNKSVKTPNYICRPRDTVSLRTKQGIKKVFLKNYLKG</sequence>
<evidence type="ECO:0000250" key="1"/>
<evidence type="ECO:0000305" key="2"/>
<proteinExistence type="evidence at protein level"/>
<feature type="chain" id="PRO_0000132556" description="Small ribosomal subunit protein uS4c">
    <location>
        <begin position="1"/>
        <end position="257"/>
    </location>
</feature>
<feature type="domain" description="S4 RNA-binding 1">
    <location>
        <begin position="110"/>
        <end position="170"/>
    </location>
</feature>
<feature type="domain" description="S4 RNA-binding 2">
    <location>
        <begin position="189"/>
        <end position="255"/>
    </location>
</feature>
<feature type="sequence variant" description="In CC-3008; suppresses streptomycin dependence of the S12 mutant P90L.">
    <original>Q</original>
    <variation>P</variation>
    <location>
        <position position="73"/>
    </location>
</feature>
<feature type="sequence variant" description="In CC-3010; suppresses streptomycin dependence of the S12 mutant P90L.">
    <original>V</original>
    <variation>GITERQLVNYV</variation>
    <location>
        <position position="90"/>
    </location>
</feature>
<feature type="sequence variant" description="In CC-3009; suppresses streptomycin dependence of the S12 mutant P90L.">
    <original>K</original>
    <variation>IVNYVRK</variation>
    <location>
        <position position="92"/>
    </location>
</feature>
<name>RR4_CHLRE</name>